<feature type="chain" id="PRO_0000231879" description="Homoserine O-acetyltransferase">
    <location>
        <begin position="1"/>
        <end position="358"/>
    </location>
</feature>
<feature type="domain" description="AB hydrolase-1" evidence="1">
    <location>
        <begin position="52"/>
        <end position="337"/>
    </location>
</feature>
<feature type="active site" description="Nucleophile" evidence="1">
    <location>
        <position position="148"/>
    </location>
</feature>
<feature type="active site" evidence="1">
    <location>
        <position position="304"/>
    </location>
</feature>
<feature type="active site" evidence="1">
    <location>
        <position position="333"/>
    </location>
</feature>
<feature type="binding site" evidence="1">
    <location>
        <position position="217"/>
    </location>
    <ligand>
        <name>substrate</name>
    </ligand>
</feature>
<feature type="binding site" evidence="1">
    <location>
        <position position="334"/>
    </location>
    <ligand>
        <name>substrate</name>
    </ligand>
</feature>
<reference key="1">
    <citation type="submission" date="2005-08" db="EMBL/GenBank/DDBJ databases">
        <title>Complete sequence of Pelodictyon luteolum DSM 273.</title>
        <authorList>
            <consortium name="US DOE Joint Genome Institute"/>
            <person name="Copeland A."/>
            <person name="Lucas S."/>
            <person name="Lapidus A."/>
            <person name="Barry K."/>
            <person name="Detter J.C."/>
            <person name="Glavina T."/>
            <person name="Hammon N."/>
            <person name="Israni S."/>
            <person name="Pitluck S."/>
            <person name="Bryant D."/>
            <person name="Schmutz J."/>
            <person name="Larimer F."/>
            <person name="Land M."/>
            <person name="Kyrpides N."/>
            <person name="Ivanova N."/>
            <person name="Richardson P."/>
        </authorList>
    </citation>
    <scope>NUCLEOTIDE SEQUENCE [LARGE SCALE GENOMIC DNA]</scope>
    <source>
        <strain>DSM 273 / BCRC 81028 / 2530</strain>
    </source>
</reference>
<evidence type="ECO:0000255" key="1">
    <source>
        <dbReference type="HAMAP-Rule" id="MF_00296"/>
    </source>
</evidence>
<accession>Q3B5A5</accession>
<dbReference type="EC" id="2.3.1.31" evidence="1"/>
<dbReference type="EMBL" id="CP000096">
    <property type="protein sequence ID" value="ABB23476.1"/>
    <property type="molecule type" value="Genomic_DNA"/>
</dbReference>
<dbReference type="SMR" id="Q3B5A5"/>
<dbReference type="STRING" id="319225.Plut_0593"/>
<dbReference type="ESTHER" id="pelld-metx">
    <property type="family name" value="Homoserine_transacetylase"/>
</dbReference>
<dbReference type="KEGG" id="plt:Plut_0593"/>
<dbReference type="eggNOG" id="COG2021">
    <property type="taxonomic scope" value="Bacteria"/>
</dbReference>
<dbReference type="HOGENOM" id="CLU_028760_1_2_10"/>
<dbReference type="OrthoDB" id="9800754at2"/>
<dbReference type="UniPathway" id="UPA00051">
    <property type="reaction ID" value="UER00074"/>
</dbReference>
<dbReference type="Proteomes" id="UP000002709">
    <property type="component" value="Chromosome"/>
</dbReference>
<dbReference type="GO" id="GO:0005737">
    <property type="term" value="C:cytoplasm"/>
    <property type="evidence" value="ECO:0007669"/>
    <property type="project" value="UniProtKB-SubCell"/>
</dbReference>
<dbReference type="GO" id="GO:0004414">
    <property type="term" value="F:homoserine O-acetyltransferase activity"/>
    <property type="evidence" value="ECO:0007669"/>
    <property type="project" value="UniProtKB-UniRule"/>
</dbReference>
<dbReference type="GO" id="GO:0009092">
    <property type="term" value="P:homoserine metabolic process"/>
    <property type="evidence" value="ECO:0007669"/>
    <property type="project" value="TreeGrafter"/>
</dbReference>
<dbReference type="GO" id="GO:0009086">
    <property type="term" value="P:methionine biosynthetic process"/>
    <property type="evidence" value="ECO:0007669"/>
    <property type="project" value="UniProtKB-UniRule"/>
</dbReference>
<dbReference type="Gene3D" id="3.40.50.1820">
    <property type="entry name" value="alpha/beta hydrolase"/>
    <property type="match status" value="1"/>
</dbReference>
<dbReference type="HAMAP" id="MF_00296">
    <property type="entry name" value="MetX_acyltransf"/>
    <property type="match status" value="1"/>
</dbReference>
<dbReference type="InterPro" id="IPR000073">
    <property type="entry name" value="AB_hydrolase_1"/>
</dbReference>
<dbReference type="InterPro" id="IPR029058">
    <property type="entry name" value="AB_hydrolase_fold"/>
</dbReference>
<dbReference type="InterPro" id="IPR008220">
    <property type="entry name" value="HAT_MetX-like"/>
</dbReference>
<dbReference type="NCBIfam" id="TIGR01392">
    <property type="entry name" value="homoserO_Ac_trn"/>
    <property type="match status" value="1"/>
</dbReference>
<dbReference type="NCBIfam" id="NF001209">
    <property type="entry name" value="PRK00175.1"/>
    <property type="match status" value="1"/>
</dbReference>
<dbReference type="PANTHER" id="PTHR32268">
    <property type="entry name" value="HOMOSERINE O-ACETYLTRANSFERASE"/>
    <property type="match status" value="1"/>
</dbReference>
<dbReference type="PANTHER" id="PTHR32268:SF11">
    <property type="entry name" value="HOMOSERINE O-ACETYLTRANSFERASE"/>
    <property type="match status" value="1"/>
</dbReference>
<dbReference type="Pfam" id="PF00561">
    <property type="entry name" value="Abhydrolase_1"/>
    <property type="match status" value="1"/>
</dbReference>
<dbReference type="PIRSF" id="PIRSF000443">
    <property type="entry name" value="Homoser_Ac_trans"/>
    <property type="match status" value="1"/>
</dbReference>
<dbReference type="SUPFAM" id="SSF53474">
    <property type="entry name" value="alpha/beta-Hydrolases"/>
    <property type="match status" value="1"/>
</dbReference>
<keyword id="KW-0012">Acyltransferase</keyword>
<keyword id="KW-0028">Amino-acid biosynthesis</keyword>
<keyword id="KW-0963">Cytoplasm</keyword>
<keyword id="KW-0486">Methionine biosynthesis</keyword>
<keyword id="KW-1185">Reference proteome</keyword>
<keyword id="KW-0808">Transferase</keyword>
<organism>
    <name type="scientific">Chlorobium luteolum (strain DSM 273 / BCRC 81028 / 2530)</name>
    <name type="common">Pelodictyon luteolum</name>
    <dbReference type="NCBI Taxonomy" id="319225"/>
    <lineage>
        <taxon>Bacteria</taxon>
        <taxon>Pseudomonadati</taxon>
        <taxon>Chlorobiota</taxon>
        <taxon>Chlorobiia</taxon>
        <taxon>Chlorobiales</taxon>
        <taxon>Chlorobiaceae</taxon>
        <taxon>Chlorobium/Pelodictyon group</taxon>
        <taxon>Pelodictyon</taxon>
    </lineage>
</organism>
<proteinExistence type="inferred from homology"/>
<gene>
    <name evidence="1" type="primary">metXA</name>
    <name type="ordered locus">Plut_0593</name>
</gene>
<protein>
    <recommendedName>
        <fullName evidence="1">Homoserine O-acetyltransferase</fullName>
        <shortName evidence="1">HAT</shortName>
        <ecNumber evidence="1">2.3.1.31</ecNumber>
    </recommendedName>
    <alternativeName>
        <fullName evidence="1">Homoserine transacetylase</fullName>
        <shortName evidence="1">HTA</shortName>
    </alternativeName>
</protein>
<name>METXA_CHLL3</name>
<sequence length="358" mass="40034">MNRGMKPINELISPDTKHYSFTEPFQTELGATLPSVEVAYRTWGTLNEARDNVILICHALTGSADADQWWGGLFGEGCGFDATRDFIICSNVLGSCYGTTGPLSPNPATGRHYGPDFPLITIRDMVHVERHLLRHLGIERVKLVVGASLGGMQVLEWGALYPEVALALMPMGISGRHSAWCIAQSEAQRQAIMADALWKDGWYEEDAPPARGLGAARMMAMCTYRSFRNFEEKFGRQRQEDGTFKAVSYMHHQGGRLVERFDANTYITLTRAMDMHDLGRGRSGYEEAVCAMTQPVEILSIDSDVLYPKSEQQELACLLPNSKILYLDEPYGHDAFLIDVERVSRMVRDFLQAISRKG</sequence>
<comment type="function">
    <text evidence="1">Transfers an acetyl group from acetyl-CoA to L-homoserine, forming acetyl-L-homoserine.</text>
</comment>
<comment type="catalytic activity">
    <reaction evidence="1">
        <text>L-homoserine + acetyl-CoA = O-acetyl-L-homoserine + CoA</text>
        <dbReference type="Rhea" id="RHEA:13701"/>
        <dbReference type="ChEBI" id="CHEBI:57287"/>
        <dbReference type="ChEBI" id="CHEBI:57288"/>
        <dbReference type="ChEBI" id="CHEBI:57476"/>
        <dbReference type="ChEBI" id="CHEBI:57716"/>
        <dbReference type="EC" id="2.3.1.31"/>
    </reaction>
</comment>
<comment type="pathway">
    <text evidence="1">Amino-acid biosynthesis; L-methionine biosynthesis via de novo pathway; O-acetyl-L-homoserine from L-homoserine: step 1/1.</text>
</comment>
<comment type="subunit">
    <text evidence="1">Homodimer.</text>
</comment>
<comment type="subcellular location">
    <subcellularLocation>
        <location evidence="1">Cytoplasm</location>
    </subcellularLocation>
</comment>
<comment type="similarity">
    <text evidence="1">Belongs to the AB hydrolase superfamily. MetX family.</text>
</comment>